<accession>Q3IJU8</accession>
<protein>
    <recommendedName>
        <fullName evidence="1">UDP-N-acetylenolpyruvoylglucosamine reductase</fullName>
        <ecNumber evidence="1">1.3.1.98</ecNumber>
    </recommendedName>
    <alternativeName>
        <fullName evidence="1">UDP-N-acetylmuramate dehydrogenase</fullName>
    </alternativeName>
</protein>
<dbReference type="EC" id="1.3.1.98" evidence="1"/>
<dbReference type="EMBL" id="CR954246">
    <property type="protein sequence ID" value="CAI87949.1"/>
    <property type="molecule type" value="Genomic_DNA"/>
</dbReference>
<dbReference type="SMR" id="Q3IJU8"/>
<dbReference type="STRING" id="326442.PSHAa2914"/>
<dbReference type="KEGG" id="pha:PSHAa2914"/>
<dbReference type="PATRIC" id="fig|326442.8.peg.2812"/>
<dbReference type="eggNOG" id="COG0812">
    <property type="taxonomic scope" value="Bacteria"/>
</dbReference>
<dbReference type="HOGENOM" id="CLU_035304_0_0_6"/>
<dbReference type="BioCyc" id="PHAL326442:PSHA_RS14315-MONOMER"/>
<dbReference type="UniPathway" id="UPA00219"/>
<dbReference type="Proteomes" id="UP000006843">
    <property type="component" value="Chromosome I"/>
</dbReference>
<dbReference type="GO" id="GO:0005829">
    <property type="term" value="C:cytosol"/>
    <property type="evidence" value="ECO:0007669"/>
    <property type="project" value="TreeGrafter"/>
</dbReference>
<dbReference type="GO" id="GO:0071949">
    <property type="term" value="F:FAD binding"/>
    <property type="evidence" value="ECO:0007669"/>
    <property type="project" value="InterPro"/>
</dbReference>
<dbReference type="GO" id="GO:0008762">
    <property type="term" value="F:UDP-N-acetylmuramate dehydrogenase activity"/>
    <property type="evidence" value="ECO:0007669"/>
    <property type="project" value="UniProtKB-UniRule"/>
</dbReference>
<dbReference type="GO" id="GO:0051301">
    <property type="term" value="P:cell division"/>
    <property type="evidence" value="ECO:0007669"/>
    <property type="project" value="UniProtKB-KW"/>
</dbReference>
<dbReference type="GO" id="GO:0071555">
    <property type="term" value="P:cell wall organization"/>
    <property type="evidence" value="ECO:0007669"/>
    <property type="project" value="UniProtKB-KW"/>
</dbReference>
<dbReference type="GO" id="GO:0009252">
    <property type="term" value="P:peptidoglycan biosynthetic process"/>
    <property type="evidence" value="ECO:0007669"/>
    <property type="project" value="UniProtKB-UniRule"/>
</dbReference>
<dbReference type="GO" id="GO:0008360">
    <property type="term" value="P:regulation of cell shape"/>
    <property type="evidence" value="ECO:0007669"/>
    <property type="project" value="UniProtKB-KW"/>
</dbReference>
<dbReference type="Gene3D" id="3.30.465.10">
    <property type="match status" value="1"/>
</dbReference>
<dbReference type="Gene3D" id="3.90.78.10">
    <property type="entry name" value="UDP-N-acetylenolpyruvoylglucosamine reductase, C-terminal domain"/>
    <property type="match status" value="1"/>
</dbReference>
<dbReference type="Gene3D" id="3.30.43.10">
    <property type="entry name" value="Uridine Diphospho-n-acetylenolpyruvylglucosamine Reductase, domain 2"/>
    <property type="match status" value="1"/>
</dbReference>
<dbReference type="HAMAP" id="MF_00037">
    <property type="entry name" value="MurB"/>
    <property type="match status" value="1"/>
</dbReference>
<dbReference type="InterPro" id="IPR016166">
    <property type="entry name" value="FAD-bd_PCMH"/>
</dbReference>
<dbReference type="InterPro" id="IPR036318">
    <property type="entry name" value="FAD-bd_PCMH-like_sf"/>
</dbReference>
<dbReference type="InterPro" id="IPR016167">
    <property type="entry name" value="FAD-bd_PCMH_sub1"/>
</dbReference>
<dbReference type="InterPro" id="IPR016169">
    <property type="entry name" value="FAD-bd_PCMH_sub2"/>
</dbReference>
<dbReference type="InterPro" id="IPR003170">
    <property type="entry name" value="MurB"/>
</dbReference>
<dbReference type="InterPro" id="IPR011601">
    <property type="entry name" value="MurB_C"/>
</dbReference>
<dbReference type="InterPro" id="IPR036635">
    <property type="entry name" value="MurB_C_sf"/>
</dbReference>
<dbReference type="InterPro" id="IPR006094">
    <property type="entry name" value="Oxid_FAD_bind_N"/>
</dbReference>
<dbReference type="NCBIfam" id="TIGR00179">
    <property type="entry name" value="murB"/>
    <property type="match status" value="1"/>
</dbReference>
<dbReference type="NCBIfam" id="NF000755">
    <property type="entry name" value="PRK00046.1"/>
    <property type="match status" value="1"/>
</dbReference>
<dbReference type="PANTHER" id="PTHR21071">
    <property type="entry name" value="UDP-N-ACETYLENOLPYRUVOYLGLUCOSAMINE REDUCTASE"/>
    <property type="match status" value="1"/>
</dbReference>
<dbReference type="PANTHER" id="PTHR21071:SF4">
    <property type="entry name" value="UDP-N-ACETYLENOLPYRUVOYLGLUCOSAMINE REDUCTASE"/>
    <property type="match status" value="1"/>
</dbReference>
<dbReference type="Pfam" id="PF01565">
    <property type="entry name" value="FAD_binding_4"/>
    <property type="match status" value="1"/>
</dbReference>
<dbReference type="Pfam" id="PF02873">
    <property type="entry name" value="MurB_C"/>
    <property type="match status" value="1"/>
</dbReference>
<dbReference type="SUPFAM" id="SSF56176">
    <property type="entry name" value="FAD-binding/transporter-associated domain-like"/>
    <property type="match status" value="1"/>
</dbReference>
<dbReference type="SUPFAM" id="SSF56194">
    <property type="entry name" value="Uridine diphospho-N-Acetylenolpyruvylglucosamine reductase, MurB, C-terminal domain"/>
    <property type="match status" value="1"/>
</dbReference>
<dbReference type="PROSITE" id="PS51387">
    <property type="entry name" value="FAD_PCMH"/>
    <property type="match status" value="1"/>
</dbReference>
<feature type="chain" id="PRO_0000224706" description="UDP-N-acetylenolpyruvoylglucosamine reductase">
    <location>
        <begin position="1"/>
        <end position="336"/>
    </location>
</feature>
<feature type="domain" description="FAD-binding PCMH-type" evidence="1">
    <location>
        <begin position="1"/>
        <end position="178"/>
    </location>
</feature>
<feature type="active site" evidence="1">
    <location>
        <position position="154"/>
    </location>
</feature>
<feature type="active site" description="Proton donor" evidence="1">
    <location>
        <position position="222"/>
    </location>
</feature>
<feature type="active site" evidence="1">
    <location>
        <position position="318"/>
    </location>
</feature>
<proteinExistence type="inferred from homology"/>
<organism>
    <name type="scientific">Pseudoalteromonas translucida (strain TAC 125)</name>
    <dbReference type="NCBI Taxonomy" id="326442"/>
    <lineage>
        <taxon>Bacteria</taxon>
        <taxon>Pseudomonadati</taxon>
        <taxon>Pseudomonadota</taxon>
        <taxon>Gammaproteobacteria</taxon>
        <taxon>Alteromonadales</taxon>
        <taxon>Pseudoalteromonadaceae</taxon>
        <taxon>Pseudoalteromonas</taxon>
    </lineage>
</organism>
<reference key="1">
    <citation type="journal article" date="2005" name="Genome Res.">
        <title>Coping with cold: the genome of the versatile marine Antarctica bacterium Pseudoalteromonas haloplanktis TAC125.</title>
        <authorList>
            <person name="Medigue C."/>
            <person name="Krin E."/>
            <person name="Pascal G."/>
            <person name="Barbe V."/>
            <person name="Bernsel A."/>
            <person name="Bertin P.N."/>
            <person name="Cheung F."/>
            <person name="Cruveiller S."/>
            <person name="D'Amico S."/>
            <person name="Duilio A."/>
            <person name="Fang G."/>
            <person name="Feller G."/>
            <person name="Ho C."/>
            <person name="Mangenot S."/>
            <person name="Marino G."/>
            <person name="Nilsson J."/>
            <person name="Parrilli E."/>
            <person name="Rocha E.P.C."/>
            <person name="Rouy Z."/>
            <person name="Sekowska A."/>
            <person name="Tutino M.L."/>
            <person name="Vallenet D."/>
            <person name="von Heijne G."/>
            <person name="Danchin A."/>
        </authorList>
    </citation>
    <scope>NUCLEOTIDE SEQUENCE [LARGE SCALE GENOMIC DNA]</scope>
    <source>
        <strain>TAC 125</strain>
    </source>
</reference>
<keyword id="KW-0131">Cell cycle</keyword>
<keyword id="KW-0132">Cell division</keyword>
<keyword id="KW-0133">Cell shape</keyword>
<keyword id="KW-0961">Cell wall biogenesis/degradation</keyword>
<keyword id="KW-0963">Cytoplasm</keyword>
<keyword id="KW-0274">FAD</keyword>
<keyword id="KW-0285">Flavoprotein</keyword>
<keyword id="KW-0521">NADP</keyword>
<keyword id="KW-0560">Oxidoreductase</keyword>
<keyword id="KW-0573">Peptidoglycan synthesis</keyword>
<keyword id="KW-1185">Reference proteome</keyword>
<sequence length="336" mass="37167">MAHSLQTLHTFALTSQCQQFVKINNLEQLKTQSFKPPFCLLGEGSNTVFLNDYTGTVIKMATQGVQIKERANDYLISVAAGENWHQLVSELLAKNIPGLENLALIPGTVGAAPVQNIGAYGVELAKFVESVEYFDIANKTFNTLNNAQCEFGYRDSIFKHALKNKAVITTVHLALPKEWQPVLSYGPLQQLAAVTPQAVFEQVIATRNSKLPNPYTLPNAGSFFKNPIITNQCLAALLTTFADLPHYKYGAKHHKVAAGWLIEQAGLKGYRIAGIEVHKQQALVLVNYGQSQGSDLIAMIKHIQHSVFSRYNIMLEHEVRLINNNSECHITAEPTP</sequence>
<gene>
    <name evidence="1" type="primary">murB</name>
    <name type="ordered locus">PSHAa2914</name>
</gene>
<evidence type="ECO:0000255" key="1">
    <source>
        <dbReference type="HAMAP-Rule" id="MF_00037"/>
    </source>
</evidence>
<name>MURB_PSET1</name>
<comment type="function">
    <text evidence="1">Cell wall formation.</text>
</comment>
<comment type="catalytic activity">
    <reaction evidence="1">
        <text>UDP-N-acetyl-alpha-D-muramate + NADP(+) = UDP-N-acetyl-3-O-(1-carboxyvinyl)-alpha-D-glucosamine + NADPH + H(+)</text>
        <dbReference type="Rhea" id="RHEA:12248"/>
        <dbReference type="ChEBI" id="CHEBI:15378"/>
        <dbReference type="ChEBI" id="CHEBI:57783"/>
        <dbReference type="ChEBI" id="CHEBI:58349"/>
        <dbReference type="ChEBI" id="CHEBI:68483"/>
        <dbReference type="ChEBI" id="CHEBI:70757"/>
        <dbReference type="EC" id="1.3.1.98"/>
    </reaction>
</comment>
<comment type="cofactor">
    <cofactor evidence="1">
        <name>FAD</name>
        <dbReference type="ChEBI" id="CHEBI:57692"/>
    </cofactor>
</comment>
<comment type="pathway">
    <text evidence="1">Cell wall biogenesis; peptidoglycan biosynthesis.</text>
</comment>
<comment type="subcellular location">
    <subcellularLocation>
        <location evidence="1">Cytoplasm</location>
    </subcellularLocation>
</comment>
<comment type="similarity">
    <text evidence="1">Belongs to the MurB family.</text>
</comment>